<evidence type="ECO:0000255" key="1">
    <source>
        <dbReference type="HAMAP-Rule" id="MF_01509"/>
    </source>
</evidence>
<organism>
    <name type="scientific">Methanococcus maripaludis (strain C6 / ATCC BAA-1332)</name>
    <dbReference type="NCBI Taxonomy" id="444158"/>
    <lineage>
        <taxon>Archaea</taxon>
        <taxon>Methanobacteriati</taxon>
        <taxon>Methanobacteriota</taxon>
        <taxon>Methanomada group</taxon>
        <taxon>Methanococci</taxon>
        <taxon>Methanococcales</taxon>
        <taxon>Methanococcaceae</taxon>
        <taxon>Methanococcus</taxon>
    </lineage>
</organism>
<protein>
    <recommendedName>
        <fullName evidence="1">Replication factor C small subunit</fullName>
        <shortName evidence="1">RFC small subunit</shortName>
    </recommendedName>
    <alternativeName>
        <fullName evidence="1">Clamp loader small subunit</fullName>
    </alternativeName>
</protein>
<name>RFCS_METM6</name>
<keyword id="KW-0067">ATP-binding</keyword>
<keyword id="KW-0235">DNA replication</keyword>
<keyword id="KW-0547">Nucleotide-binding</keyword>
<gene>
    <name evidence="1" type="primary">rfcS</name>
    <name type="ordered locus">MmarC6_0484</name>
</gene>
<sequence>MQKPWVEKYRPETLPEVVGHHEIIKRLTNYVEKKSMPHLLFSGSPGVGKTTAALALAKDLYGDTWRENFLELNSSDERGIDVIRTKVKDFARTKPIGDAPFKVIFLDESDALTSDAQNALRRTMEKYSDICRFILSCNYPSKIIPPIQSRCAIFRFSPLKTEDLVENLKDISEKETLTLEKGGIDAIIYVSEGDMRKAINVLQTAAAVSDTVTEEIVYKVASKARPDEIKKMTQLALNGKFVEAREQLYNLMIDWGMSGEDILIQVFREVPNLDISEKEKVHLVEAIGECDFRIVEGSNERIQLSALLAKMGILE</sequence>
<proteinExistence type="inferred from homology"/>
<dbReference type="EMBL" id="CP000867">
    <property type="protein sequence ID" value="ABX01302.1"/>
    <property type="molecule type" value="Genomic_DNA"/>
</dbReference>
<dbReference type="SMR" id="A9A6K6"/>
<dbReference type="STRING" id="444158.MmarC6_0484"/>
<dbReference type="KEGG" id="mmx:MmarC6_0484"/>
<dbReference type="eggNOG" id="arCOG00469">
    <property type="taxonomic scope" value="Archaea"/>
</dbReference>
<dbReference type="HOGENOM" id="CLU_042324_2_1_2"/>
<dbReference type="OrthoDB" id="7928at2157"/>
<dbReference type="PhylomeDB" id="A9A6K6"/>
<dbReference type="GO" id="GO:0005663">
    <property type="term" value="C:DNA replication factor C complex"/>
    <property type="evidence" value="ECO:0007669"/>
    <property type="project" value="InterPro"/>
</dbReference>
<dbReference type="GO" id="GO:0005524">
    <property type="term" value="F:ATP binding"/>
    <property type="evidence" value="ECO:0007669"/>
    <property type="project" value="UniProtKB-UniRule"/>
</dbReference>
<dbReference type="GO" id="GO:0016887">
    <property type="term" value="F:ATP hydrolysis activity"/>
    <property type="evidence" value="ECO:0007669"/>
    <property type="project" value="InterPro"/>
</dbReference>
<dbReference type="GO" id="GO:0003677">
    <property type="term" value="F:DNA binding"/>
    <property type="evidence" value="ECO:0007669"/>
    <property type="project" value="InterPro"/>
</dbReference>
<dbReference type="GO" id="GO:0003689">
    <property type="term" value="F:DNA clamp loader activity"/>
    <property type="evidence" value="ECO:0007669"/>
    <property type="project" value="UniProtKB-UniRule"/>
</dbReference>
<dbReference type="GO" id="GO:0006281">
    <property type="term" value="P:DNA repair"/>
    <property type="evidence" value="ECO:0007669"/>
    <property type="project" value="TreeGrafter"/>
</dbReference>
<dbReference type="GO" id="GO:0006261">
    <property type="term" value="P:DNA-templated DNA replication"/>
    <property type="evidence" value="ECO:0007669"/>
    <property type="project" value="TreeGrafter"/>
</dbReference>
<dbReference type="CDD" id="cd00009">
    <property type="entry name" value="AAA"/>
    <property type="match status" value="1"/>
</dbReference>
<dbReference type="CDD" id="cd18140">
    <property type="entry name" value="HLD_clamp_RFC"/>
    <property type="match status" value="1"/>
</dbReference>
<dbReference type="FunFam" id="1.20.272.10:FF:000029">
    <property type="entry name" value="Replication factor C small subunit"/>
    <property type="match status" value="1"/>
</dbReference>
<dbReference type="FunFam" id="3.40.50.300:FF:000129">
    <property type="entry name" value="Replication factor C subunit 5"/>
    <property type="match status" value="1"/>
</dbReference>
<dbReference type="Gene3D" id="1.10.8.60">
    <property type="match status" value="1"/>
</dbReference>
<dbReference type="Gene3D" id="1.20.272.10">
    <property type="match status" value="1"/>
</dbReference>
<dbReference type="Gene3D" id="3.40.50.300">
    <property type="entry name" value="P-loop containing nucleotide triphosphate hydrolases"/>
    <property type="match status" value="1"/>
</dbReference>
<dbReference type="HAMAP" id="MF_01509">
    <property type="entry name" value="RfcS"/>
    <property type="match status" value="1"/>
</dbReference>
<dbReference type="InterPro" id="IPR003593">
    <property type="entry name" value="AAA+_ATPase"/>
</dbReference>
<dbReference type="InterPro" id="IPR003959">
    <property type="entry name" value="ATPase_AAA_core"/>
</dbReference>
<dbReference type="InterPro" id="IPR008921">
    <property type="entry name" value="DNA_pol3_clamp-load_cplx_C"/>
</dbReference>
<dbReference type="InterPro" id="IPR050238">
    <property type="entry name" value="DNA_Rep/Repair_Clamp_Loader"/>
</dbReference>
<dbReference type="InterPro" id="IPR027417">
    <property type="entry name" value="P-loop_NTPase"/>
</dbReference>
<dbReference type="InterPro" id="IPR023748">
    <property type="entry name" value="Rep_factor-C_ssu_arc"/>
</dbReference>
<dbReference type="InterPro" id="IPR013748">
    <property type="entry name" value="Rep_factorC_C"/>
</dbReference>
<dbReference type="InterPro" id="IPR047854">
    <property type="entry name" value="RFC_lid"/>
</dbReference>
<dbReference type="NCBIfam" id="NF001679">
    <property type="entry name" value="PRK00440.1"/>
    <property type="match status" value="1"/>
</dbReference>
<dbReference type="PANTHER" id="PTHR11669">
    <property type="entry name" value="REPLICATION FACTOR C / DNA POLYMERASE III GAMMA-TAU SUBUNIT"/>
    <property type="match status" value="1"/>
</dbReference>
<dbReference type="PANTHER" id="PTHR11669:SF20">
    <property type="entry name" value="REPLICATION FACTOR C SUBUNIT 4"/>
    <property type="match status" value="1"/>
</dbReference>
<dbReference type="Pfam" id="PF00004">
    <property type="entry name" value="AAA"/>
    <property type="match status" value="1"/>
</dbReference>
<dbReference type="Pfam" id="PF21960">
    <property type="entry name" value="RCF1-5-like_lid"/>
    <property type="match status" value="1"/>
</dbReference>
<dbReference type="Pfam" id="PF08542">
    <property type="entry name" value="Rep_fac_C"/>
    <property type="match status" value="1"/>
</dbReference>
<dbReference type="SMART" id="SM00382">
    <property type="entry name" value="AAA"/>
    <property type="match status" value="1"/>
</dbReference>
<dbReference type="SUPFAM" id="SSF52540">
    <property type="entry name" value="P-loop containing nucleoside triphosphate hydrolases"/>
    <property type="match status" value="1"/>
</dbReference>
<dbReference type="SUPFAM" id="SSF48019">
    <property type="entry name" value="post-AAA+ oligomerization domain-like"/>
    <property type="match status" value="1"/>
</dbReference>
<comment type="function">
    <text evidence="1">Part of the RFC clamp loader complex which loads the PCNA sliding clamp onto DNA.</text>
</comment>
<comment type="subunit">
    <text evidence="1">Heteromultimer composed of small subunits (RfcS) and large subunits (RfcL).</text>
</comment>
<comment type="similarity">
    <text evidence="1">Belongs to the activator 1 small subunits family. RfcS subfamily.</text>
</comment>
<reference key="1">
    <citation type="submission" date="2007-10" db="EMBL/GenBank/DDBJ databases">
        <title>Complete sequence of Methanococcus maripaludis C6.</title>
        <authorList>
            <consortium name="US DOE Joint Genome Institute"/>
            <person name="Copeland A."/>
            <person name="Lucas S."/>
            <person name="Lapidus A."/>
            <person name="Barry K."/>
            <person name="Glavina del Rio T."/>
            <person name="Dalin E."/>
            <person name="Tice H."/>
            <person name="Pitluck S."/>
            <person name="Clum A."/>
            <person name="Schmutz J."/>
            <person name="Larimer F."/>
            <person name="Land M."/>
            <person name="Hauser L."/>
            <person name="Kyrpides N."/>
            <person name="Mikhailova N."/>
            <person name="Sieprawska-Lupa M."/>
            <person name="Whitman W.B."/>
            <person name="Richardson P."/>
        </authorList>
    </citation>
    <scope>NUCLEOTIDE SEQUENCE [LARGE SCALE GENOMIC DNA]</scope>
    <source>
        <strain>C6 / ATCC BAA-1332</strain>
    </source>
</reference>
<accession>A9A6K6</accession>
<feature type="chain" id="PRO_1000201165" description="Replication factor C small subunit">
    <location>
        <begin position="1"/>
        <end position="315"/>
    </location>
</feature>
<feature type="binding site" evidence="1">
    <location>
        <begin position="43"/>
        <end position="50"/>
    </location>
    <ligand>
        <name>ATP</name>
        <dbReference type="ChEBI" id="CHEBI:30616"/>
    </ligand>
</feature>